<proteinExistence type="inferred from homology"/>
<reference key="1">
    <citation type="submission" date="2006-12" db="EMBL/GenBank/DDBJ databases">
        <title>Complete sequence of chromosome 1 of Acidovorax sp. JS42.</title>
        <authorList>
            <person name="Copeland A."/>
            <person name="Lucas S."/>
            <person name="Lapidus A."/>
            <person name="Barry K."/>
            <person name="Detter J.C."/>
            <person name="Glavina del Rio T."/>
            <person name="Dalin E."/>
            <person name="Tice H."/>
            <person name="Pitluck S."/>
            <person name="Chertkov O."/>
            <person name="Brettin T."/>
            <person name="Bruce D."/>
            <person name="Han C."/>
            <person name="Tapia R."/>
            <person name="Gilna P."/>
            <person name="Schmutz J."/>
            <person name="Larimer F."/>
            <person name="Land M."/>
            <person name="Hauser L."/>
            <person name="Kyrpides N."/>
            <person name="Kim E."/>
            <person name="Stahl D."/>
            <person name="Richardson P."/>
        </authorList>
    </citation>
    <scope>NUCLEOTIDE SEQUENCE [LARGE SCALE GENOMIC DNA]</scope>
    <source>
        <strain>JS42</strain>
    </source>
</reference>
<organism>
    <name type="scientific">Acidovorax sp. (strain JS42)</name>
    <dbReference type="NCBI Taxonomy" id="232721"/>
    <lineage>
        <taxon>Bacteria</taxon>
        <taxon>Pseudomonadati</taxon>
        <taxon>Pseudomonadota</taxon>
        <taxon>Betaproteobacteria</taxon>
        <taxon>Burkholderiales</taxon>
        <taxon>Comamonadaceae</taxon>
        <taxon>Acidovorax</taxon>
    </lineage>
</organism>
<gene>
    <name evidence="1" type="primary">rplD</name>
    <name type="ordered locus">Ajs_0279</name>
</gene>
<protein>
    <recommendedName>
        <fullName evidence="1">Large ribosomal subunit protein uL4</fullName>
    </recommendedName>
    <alternativeName>
        <fullName evidence="3">50S ribosomal protein L4</fullName>
    </alternativeName>
</protein>
<feature type="chain" id="PRO_1000052347" description="Large ribosomal subunit protein uL4">
    <location>
        <begin position="1"/>
        <end position="206"/>
    </location>
</feature>
<feature type="region of interest" description="Disordered" evidence="2">
    <location>
        <begin position="46"/>
        <end position="77"/>
    </location>
</feature>
<dbReference type="EMBL" id="CP000539">
    <property type="protein sequence ID" value="ABM40533.1"/>
    <property type="molecule type" value="Genomic_DNA"/>
</dbReference>
<dbReference type="SMR" id="A1W2Q8"/>
<dbReference type="STRING" id="232721.Ajs_0279"/>
<dbReference type="KEGG" id="ajs:Ajs_0279"/>
<dbReference type="eggNOG" id="COG0088">
    <property type="taxonomic scope" value="Bacteria"/>
</dbReference>
<dbReference type="HOGENOM" id="CLU_041575_5_2_4"/>
<dbReference type="Proteomes" id="UP000000645">
    <property type="component" value="Chromosome"/>
</dbReference>
<dbReference type="GO" id="GO:1990904">
    <property type="term" value="C:ribonucleoprotein complex"/>
    <property type="evidence" value="ECO:0007669"/>
    <property type="project" value="UniProtKB-KW"/>
</dbReference>
<dbReference type="GO" id="GO:0005840">
    <property type="term" value="C:ribosome"/>
    <property type="evidence" value="ECO:0007669"/>
    <property type="project" value="UniProtKB-KW"/>
</dbReference>
<dbReference type="GO" id="GO:0019843">
    <property type="term" value="F:rRNA binding"/>
    <property type="evidence" value="ECO:0007669"/>
    <property type="project" value="UniProtKB-UniRule"/>
</dbReference>
<dbReference type="GO" id="GO:0003735">
    <property type="term" value="F:structural constituent of ribosome"/>
    <property type="evidence" value="ECO:0007669"/>
    <property type="project" value="InterPro"/>
</dbReference>
<dbReference type="GO" id="GO:0006412">
    <property type="term" value="P:translation"/>
    <property type="evidence" value="ECO:0007669"/>
    <property type="project" value="UniProtKB-UniRule"/>
</dbReference>
<dbReference type="Gene3D" id="3.40.1370.10">
    <property type="match status" value="1"/>
</dbReference>
<dbReference type="HAMAP" id="MF_01328_B">
    <property type="entry name" value="Ribosomal_uL4_B"/>
    <property type="match status" value="1"/>
</dbReference>
<dbReference type="InterPro" id="IPR002136">
    <property type="entry name" value="Ribosomal_uL4"/>
</dbReference>
<dbReference type="InterPro" id="IPR013005">
    <property type="entry name" value="Ribosomal_uL4-like"/>
</dbReference>
<dbReference type="InterPro" id="IPR023574">
    <property type="entry name" value="Ribosomal_uL4_dom_sf"/>
</dbReference>
<dbReference type="NCBIfam" id="TIGR03953">
    <property type="entry name" value="rplD_bact"/>
    <property type="match status" value="1"/>
</dbReference>
<dbReference type="PANTHER" id="PTHR10746">
    <property type="entry name" value="50S RIBOSOMAL PROTEIN L4"/>
    <property type="match status" value="1"/>
</dbReference>
<dbReference type="PANTHER" id="PTHR10746:SF6">
    <property type="entry name" value="LARGE RIBOSOMAL SUBUNIT PROTEIN UL4M"/>
    <property type="match status" value="1"/>
</dbReference>
<dbReference type="Pfam" id="PF00573">
    <property type="entry name" value="Ribosomal_L4"/>
    <property type="match status" value="1"/>
</dbReference>
<dbReference type="SUPFAM" id="SSF52166">
    <property type="entry name" value="Ribosomal protein L4"/>
    <property type="match status" value="1"/>
</dbReference>
<evidence type="ECO:0000255" key="1">
    <source>
        <dbReference type="HAMAP-Rule" id="MF_01328"/>
    </source>
</evidence>
<evidence type="ECO:0000256" key="2">
    <source>
        <dbReference type="SAM" id="MobiDB-lite"/>
    </source>
</evidence>
<evidence type="ECO:0000305" key="3"/>
<sequence length="206" mass="23195">MQLELLNEQGQAASKVDVPETVFDRQYNEDLIHQIVVAYQANARQGTRAQKDREQVKHSTKKPFKQKGTGNARAGMTSSPLWRGGGRIFPNLPEENFSQKINKKMYRAGMASILSQLAREGRLAVVDSLKLDTPKTKVLADKFKAMNLQSVMVIADEVDENLYLASRNLKNVFVTEPRYADPVSLVHYKKVLVTKGAIDKLKEMFA</sequence>
<accession>A1W2Q8</accession>
<keyword id="KW-0687">Ribonucleoprotein</keyword>
<keyword id="KW-0689">Ribosomal protein</keyword>
<keyword id="KW-0694">RNA-binding</keyword>
<keyword id="KW-0699">rRNA-binding</keyword>
<name>RL4_ACISJ</name>
<comment type="function">
    <text evidence="1">One of the primary rRNA binding proteins, this protein initially binds near the 5'-end of the 23S rRNA. It is important during the early stages of 50S assembly. It makes multiple contacts with different domains of the 23S rRNA in the assembled 50S subunit and ribosome.</text>
</comment>
<comment type="function">
    <text evidence="1">Forms part of the polypeptide exit tunnel.</text>
</comment>
<comment type="subunit">
    <text evidence="1">Part of the 50S ribosomal subunit.</text>
</comment>
<comment type="similarity">
    <text evidence="1">Belongs to the universal ribosomal protein uL4 family.</text>
</comment>